<dbReference type="EMBL" id="CU329670">
    <property type="protein sequence ID" value="CAB16414.2"/>
    <property type="molecule type" value="Genomic_DNA"/>
</dbReference>
<dbReference type="PIR" id="T11596">
    <property type="entry name" value="T11596"/>
</dbReference>
<dbReference type="RefSeq" id="XP_001713107.1">
    <property type="nucleotide sequence ID" value="XM_001713055.2"/>
</dbReference>
<dbReference type="BioGRID" id="278665">
    <property type="interactions" value="3"/>
</dbReference>
<dbReference type="FunCoup" id="Q10487">
    <property type="interactions" value="11"/>
</dbReference>
<dbReference type="STRING" id="284812.Q10487"/>
<dbReference type="GlyCosmos" id="Q10487">
    <property type="glycosylation" value="1 site, No reported glycans"/>
</dbReference>
<dbReference type="iPTMnet" id="Q10487"/>
<dbReference type="PaxDb" id="4896-SPAC17C9.16c.1"/>
<dbReference type="EnsemblFungi" id="SPAC17C9.16c.1">
    <property type="protein sequence ID" value="SPAC17C9.16c.1:pep"/>
    <property type="gene ID" value="SPAC17C9.16c"/>
</dbReference>
<dbReference type="PomBase" id="SPAC17C9.16c">
    <property type="gene designation" value="mfs1"/>
</dbReference>
<dbReference type="VEuPathDB" id="FungiDB:SPAC17C9.16c"/>
<dbReference type="eggNOG" id="KOG0255">
    <property type="taxonomic scope" value="Eukaryota"/>
</dbReference>
<dbReference type="HOGENOM" id="CLU_008455_11_1_1"/>
<dbReference type="InParanoid" id="Q10487"/>
<dbReference type="OMA" id="WFESFAI"/>
<dbReference type="PhylomeDB" id="Q10487"/>
<dbReference type="PRO" id="PR:Q10487"/>
<dbReference type="Proteomes" id="UP000002485">
    <property type="component" value="Chromosome I"/>
</dbReference>
<dbReference type="GO" id="GO:0005783">
    <property type="term" value="C:endoplasmic reticulum"/>
    <property type="evidence" value="ECO:0007669"/>
    <property type="project" value="UniProtKB-SubCell"/>
</dbReference>
<dbReference type="GO" id="GO:0005886">
    <property type="term" value="C:plasma membrane"/>
    <property type="evidence" value="ECO:0000318"/>
    <property type="project" value="GO_Central"/>
</dbReference>
<dbReference type="GO" id="GO:0015244">
    <property type="term" value="F:fluconazole transmembrane transporter activity"/>
    <property type="evidence" value="ECO:0000318"/>
    <property type="project" value="GO_Central"/>
</dbReference>
<dbReference type="GO" id="GO:1990961">
    <property type="term" value="P:xenobiotic detoxification by transmembrane export across the plasma membrane"/>
    <property type="evidence" value="ECO:0000318"/>
    <property type="project" value="GO_Central"/>
</dbReference>
<dbReference type="CDD" id="cd17323">
    <property type="entry name" value="MFS_Tpo1_MDR_like"/>
    <property type="match status" value="1"/>
</dbReference>
<dbReference type="FunFam" id="1.20.1250.20:FF:000011">
    <property type="entry name" value="MFS multidrug transporter, putative"/>
    <property type="match status" value="1"/>
</dbReference>
<dbReference type="Gene3D" id="1.20.1250.20">
    <property type="entry name" value="MFS general substrate transporter like domains"/>
    <property type="match status" value="1"/>
</dbReference>
<dbReference type="InterPro" id="IPR011701">
    <property type="entry name" value="MFS"/>
</dbReference>
<dbReference type="InterPro" id="IPR020846">
    <property type="entry name" value="MFS_dom"/>
</dbReference>
<dbReference type="InterPro" id="IPR036259">
    <property type="entry name" value="MFS_trans_sf"/>
</dbReference>
<dbReference type="PANTHER" id="PTHR23502:SF23">
    <property type="entry name" value="FLUCONAZOLE RESISTANCE PROTEIN 1"/>
    <property type="match status" value="1"/>
</dbReference>
<dbReference type="PANTHER" id="PTHR23502">
    <property type="entry name" value="MAJOR FACILITATOR SUPERFAMILY"/>
    <property type="match status" value="1"/>
</dbReference>
<dbReference type="Pfam" id="PF07690">
    <property type="entry name" value="MFS_1"/>
    <property type="match status" value="1"/>
</dbReference>
<dbReference type="SUPFAM" id="SSF103473">
    <property type="entry name" value="MFS general substrate transporter"/>
    <property type="match status" value="1"/>
</dbReference>
<dbReference type="PROSITE" id="PS50850">
    <property type="entry name" value="MFS"/>
    <property type="match status" value="1"/>
</dbReference>
<feature type="chain" id="PRO_0000173445" description="Transporter mfs1">
    <location>
        <begin position="1"/>
        <end position="531"/>
    </location>
</feature>
<feature type="transmembrane region" description="Helical" evidence="1">
    <location>
        <begin position="83"/>
        <end position="103"/>
    </location>
</feature>
<feature type="transmembrane region" description="Helical" evidence="1">
    <location>
        <begin position="119"/>
        <end position="139"/>
    </location>
</feature>
<feature type="transmembrane region" description="Helical" evidence="1">
    <location>
        <begin position="158"/>
        <end position="178"/>
    </location>
</feature>
<feature type="transmembrane region" description="Helical" evidence="1">
    <location>
        <begin position="182"/>
        <end position="202"/>
    </location>
</feature>
<feature type="transmembrane region" description="Helical" evidence="1">
    <location>
        <begin position="214"/>
        <end position="234"/>
    </location>
</feature>
<feature type="transmembrane region" description="Helical" evidence="1">
    <location>
        <begin position="241"/>
        <end position="261"/>
    </location>
</feature>
<feature type="transmembrane region" description="Helical" evidence="1">
    <location>
        <begin position="325"/>
        <end position="345"/>
    </location>
</feature>
<feature type="transmembrane region" description="Helical" evidence="1">
    <location>
        <begin position="358"/>
        <end position="378"/>
    </location>
</feature>
<feature type="transmembrane region" description="Helical" evidence="1">
    <location>
        <begin position="398"/>
        <end position="418"/>
    </location>
</feature>
<feature type="transmembrane region" description="Helical" evidence="1">
    <location>
        <begin position="424"/>
        <end position="444"/>
    </location>
</feature>
<feature type="transmembrane region" description="Helical" evidence="1">
    <location>
        <begin position="496"/>
        <end position="516"/>
    </location>
</feature>
<feature type="glycosylation site" description="N-linked (GlcNAc...) asparagine" evidence="1">
    <location>
        <position position="486"/>
    </location>
</feature>
<proteinExistence type="inferred from homology"/>
<organism>
    <name type="scientific">Schizosaccharomyces pombe (strain 972 / ATCC 24843)</name>
    <name type="common">Fission yeast</name>
    <dbReference type="NCBI Taxonomy" id="284812"/>
    <lineage>
        <taxon>Eukaryota</taxon>
        <taxon>Fungi</taxon>
        <taxon>Dikarya</taxon>
        <taxon>Ascomycota</taxon>
        <taxon>Taphrinomycotina</taxon>
        <taxon>Schizosaccharomycetes</taxon>
        <taxon>Schizosaccharomycetales</taxon>
        <taxon>Schizosaccharomycetaceae</taxon>
        <taxon>Schizosaccharomyces</taxon>
    </lineage>
</organism>
<reference key="1">
    <citation type="journal article" date="2002" name="Nature">
        <title>The genome sequence of Schizosaccharomyces pombe.</title>
        <authorList>
            <person name="Wood V."/>
            <person name="Gwilliam R."/>
            <person name="Rajandream M.A."/>
            <person name="Lyne M.H."/>
            <person name="Lyne R."/>
            <person name="Stewart A."/>
            <person name="Sgouros J.G."/>
            <person name="Peat N."/>
            <person name="Hayles J."/>
            <person name="Baker S.G."/>
            <person name="Basham D."/>
            <person name="Bowman S."/>
            <person name="Brooks K."/>
            <person name="Brown D."/>
            <person name="Brown S."/>
            <person name="Chillingworth T."/>
            <person name="Churcher C.M."/>
            <person name="Collins M."/>
            <person name="Connor R."/>
            <person name="Cronin A."/>
            <person name="Davis P."/>
            <person name="Feltwell T."/>
            <person name="Fraser A."/>
            <person name="Gentles S."/>
            <person name="Goble A."/>
            <person name="Hamlin N."/>
            <person name="Harris D.E."/>
            <person name="Hidalgo J."/>
            <person name="Hodgson G."/>
            <person name="Holroyd S."/>
            <person name="Hornsby T."/>
            <person name="Howarth S."/>
            <person name="Huckle E.J."/>
            <person name="Hunt S."/>
            <person name="Jagels K."/>
            <person name="James K.D."/>
            <person name="Jones L."/>
            <person name="Jones M."/>
            <person name="Leather S."/>
            <person name="McDonald S."/>
            <person name="McLean J."/>
            <person name="Mooney P."/>
            <person name="Moule S."/>
            <person name="Mungall K.L."/>
            <person name="Murphy L.D."/>
            <person name="Niblett D."/>
            <person name="Odell C."/>
            <person name="Oliver K."/>
            <person name="O'Neil S."/>
            <person name="Pearson D."/>
            <person name="Quail M.A."/>
            <person name="Rabbinowitsch E."/>
            <person name="Rutherford K.M."/>
            <person name="Rutter S."/>
            <person name="Saunders D."/>
            <person name="Seeger K."/>
            <person name="Sharp S."/>
            <person name="Skelton J."/>
            <person name="Simmonds M.N."/>
            <person name="Squares R."/>
            <person name="Squares S."/>
            <person name="Stevens K."/>
            <person name="Taylor K."/>
            <person name="Taylor R.G."/>
            <person name="Tivey A."/>
            <person name="Walsh S.V."/>
            <person name="Warren T."/>
            <person name="Whitehead S."/>
            <person name="Woodward J.R."/>
            <person name="Volckaert G."/>
            <person name="Aert R."/>
            <person name="Robben J."/>
            <person name="Grymonprez B."/>
            <person name="Weltjens I."/>
            <person name="Vanstreels E."/>
            <person name="Rieger M."/>
            <person name="Schaefer M."/>
            <person name="Mueller-Auer S."/>
            <person name="Gabel C."/>
            <person name="Fuchs M."/>
            <person name="Duesterhoeft A."/>
            <person name="Fritzc C."/>
            <person name="Holzer E."/>
            <person name="Moestl D."/>
            <person name="Hilbert H."/>
            <person name="Borzym K."/>
            <person name="Langer I."/>
            <person name="Beck A."/>
            <person name="Lehrach H."/>
            <person name="Reinhardt R."/>
            <person name="Pohl T.M."/>
            <person name="Eger P."/>
            <person name="Zimmermann W."/>
            <person name="Wedler H."/>
            <person name="Wambutt R."/>
            <person name="Purnelle B."/>
            <person name="Goffeau A."/>
            <person name="Cadieu E."/>
            <person name="Dreano S."/>
            <person name="Gloux S."/>
            <person name="Lelaure V."/>
            <person name="Mottier S."/>
            <person name="Galibert F."/>
            <person name="Aves S.J."/>
            <person name="Xiang Z."/>
            <person name="Hunt C."/>
            <person name="Moore K."/>
            <person name="Hurst S.M."/>
            <person name="Lucas M."/>
            <person name="Rochet M."/>
            <person name="Gaillardin C."/>
            <person name="Tallada V.A."/>
            <person name="Garzon A."/>
            <person name="Thode G."/>
            <person name="Daga R.R."/>
            <person name="Cruzado L."/>
            <person name="Jimenez J."/>
            <person name="Sanchez M."/>
            <person name="del Rey F."/>
            <person name="Benito J."/>
            <person name="Dominguez A."/>
            <person name="Revuelta J.L."/>
            <person name="Moreno S."/>
            <person name="Armstrong J."/>
            <person name="Forsburg S.L."/>
            <person name="Cerutti L."/>
            <person name="Lowe T."/>
            <person name="McCombie W.R."/>
            <person name="Paulsen I."/>
            <person name="Potashkin J."/>
            <person name="Shpakovski G.V."/>
            <person name="Ussery D."/>
            <person name="Barrell B.G."/>
            <person name="Nurse P."/>
        </authorList>
    </citation>
    <scope>NUCLEOTIDE SEQUENCE [LARGE SCALE GENOMIC DNA]</scope>
    <source>
        <strain>972 / ATCC 24843</strain>
    </source>
</reference>
<reference key="2">
    <citation type="journal article" date="2006" name="Nat. Biotechnol.">
        <title>ORFeome cloning and global analysis of protein localization in the fission yeast Schizosaccharomyces pombe.</title>
        <authorList>
            <person name="Matsuyama A."/>
            <person name="Arai R."/>
            <person name="Yashiroda Y."/>
            <person name="Shirai A."/>
            <person name="Kamata A."/>
            <person name="Sekido S."/>
            <person name="Kobayashi Y."/>
            <person name="Hashimoto A."/>
            <person name="Hamamoto M."/>
            <person name="Hiraoka Y."/>
            <person name="Horinouchi S."/>
            <person name="Yoshida M."/>
        </authorList>
    </citation>
    <scope>SUBCELLULAR LOCATION [LARGE SCALE ANALYSIS]</scope>
</reference>
<accession>Q10487</accession>
<accession>Q7LGI6</accession>
<sequence length="531" mass="59319">MWFLRETIFGELVEYFSGGTRQVDVEKLGVCTDNSNVELSSCPDSSFDDEKTNQVNSEGLIIVTWDGEDDPENPKNWPLWAKLVVTFDVCFLTFAVYMGSAIFTPGIQEIRETMHVGTVPVILGLTLFVEGYAVGPLIFSPLSEVPQIGRQKIYVLSLIVFICLQIPTALGSSLGVLLPMRFLAGVFGSPALSTGGASLADIWQPWLYPYFMCFWSLGAVGGPVLGPLLGAAMVVAKSWRWQFWLLMMISALVLVIITFFMPETSEWHLLYKRAKRLRELTGNPNYKTEAEIASSQLSKGQFAKQILVRPIILCVSEPIVLSLTIYIGLVYSILYLWFEAFPILFTTVYHFTTIENGLVYMGILVGSVLTVAFYFIYLRKVMIPKFVENKGKFPAEEILIISFPAAFFIPISLFWFGWTGRESVHWIVPIVGTLFYASGSFLLFQSMFQYLAAAYPKYVASVFAGNALFRSSMAAASPLYARAMFNNTGPSYAPVGWGSTILGVISCIMIPIPFLIYKWGLKLRSRSKYAT</sequence>
<keyword id="KW-0256">Endoplasmic reticulum</keyword>
<keyword id="KW-0325">Glycoprotein</keyword>
<keyword id="KW-0472">Membrane</keyword>
<keyword id="KW-1185">Reference proteome</keyword>
<keyword id="KW-0812">Transmembrane</keyword>
<keyword id="KW-1133">Transmembrane helix</keyword>
<keyword id="KW-0813">Transport</keyword>
<comment type="subcellular location">
    <subcellularLocation>
        <location evidence="2">Endoplasmic reticulum</location>
    </subcellularLocation>
    <subcellularLocation>
        <location evidence="3">Membrane</location>
        <topology evidence="3">Multi-pass membrane protein</topology>
    </subcellularLocation>
</comment>
<comment type="similarity">
    <text evidence="3">Belongs to the major facilitator superfamily. CAR1 family.</text>
</comment>
<evidence type="ECO:0000255" key="1"/>
<evidence type="ECO:0000269" key="2">
    <source>
    </source>
</evidence>
<evidence type="ECO:0000305" key="3"/>
<gene>
    <name type="primary">mfs1</name>
    <name type="ORF">SPAC17C9.16c</name>
    <name type="ORF">SPAC9E9.16</name>
</gene>
<protein>
    <recommendedName>
        <fullName>Transporter mfs1</fullName>
    </recommendedName>
</protein>
<name>MFS1_SCHPO</name>